<accession>Q76I79</accession>
<accession>Q3TDG3</accession>
<accession>Q69ZM4</accession>
<accession>Q811E5</accession>
<feature type="initiator methionine" description="Removed" evidence="2">
    <location>
        <position position="1"/>
    </location>
</feature>
<feature type="chain" id="PRO_0000094842" description="Protein phosphatase Slingshot homolog 1">
    <location>
        <begin position="2"/>
        <end position="1042"/>
    </location>
</feature>
<feature type="domain" description="DEK-C" evidence="4">
    <location>
        <begin position="249"/>
        <end position="304"/>
    </location>
</feature>
<feature type="domain" description="Tyrosine-protein phosphatase" evidence="3">
    <location>
        <begin position="308"/>
        <end position="449"/>
    </location>
</feature>
<feature type="region of interest" description="Disordered" evidence="6">
    <location>
        <begin position="1"/>
        <end position="29"/>
    </location>
</feature>
<feature type="region of interest" description="Disordered" evidence="6">
    <location>
        <begin position="576"/>
        <end position="609"/>
    </location>
</feature>
<feature type="region of interest" description="Disordered" evidence="6">
    <location>
        <begin position="668"/>
        <end position="766"/>
    </location>
</feature>
<feature type="region of interest" description="Disordered" evidence="6">
    <location>
        <begin position="858"/>
        <end position="900"/>
    </location>
</feature>
<feature type="region of interest" description="Interaction with YWHAG" evidence="1">
    <location>
        <begin position="889"/>
        <end position="1042"/>
    </location>
</feature>
<feature type="region of interest" description="Disordered" evidence="6">
    <location>
        <begin position="915"/>
        <end position="942"/>
    </location>
</feature>
<feature type="region of interest" description="Disordered" evidence="6">
    <location>
        <begin position="985"/>
        <end position="1042"/>
    </location>
</feature>
<feature type="compositionally biased region" description="Polar residues" evidence="6">
    <location>
        <begin position="1"/>
        <end position="12"/>
    </location>
</feature>
<feature type="compositionally biased region" description="Low complexity" evidence="6">
    <location>
        <begin position="13"/>
        <end position="22"/>
    </location>
</feature>
<feature type="compositionally biased region" description="Polar residues" evidence="6">
    <location>
        <begin position="675"/>
        <end position="693"/>
    </location>
</feature>
<feature type="compositionally biased region" description="Low complexity" evidence="6">
    <location>
        <begin position="697"/>
        <end position="712"/>
    </location>
</feature>
<feature type="compositionally biased region" description="Polar residues" evidence="6">
    <location>
        <begin position="886"/>
        <end position="900"/>
    </location>
</feature>
<feature type="compositionally biased region" description="Low complexity" evidence="6">
    <location>
        <begin position="917"/>
        <end position="935"/>
    </location>
</feature>
<feature type="compositionally biased region" description="Polar residues" evidence="6">
    <location>
        <begin position="985"/>
        <end position="995"/>
    </location>
</feature>
<feature type="active site" description="Phosphocysteine intermediate" evidence="3">
    <location>
        <position position="393"/>
    </location>
</feature>
<feature type="modified residue" description="N-acetylalanine" evidence="2">
    <location>
        <position position="2"/>
    </location>
</feature>
<feature type="modified residue" description="Phosphoserine" evidence="2">
    <location>
        <position position="37"/>
    </location>
</feature>
<feature type="modified residue" description="Phosphoserine" evidence="2">
    <location>
        <position position="57"/>
    </location>
</feature>
<feature type="modified residue" description="Phosphoserine" evidence="13">
    <location>
        <position position="516"/>
    </location>
</feature>
<feature type="modified residue" description="Phosphoserine" evidence="2">
    <location>
        <position position="889"/>
    </location>
</feature>
<feature type="modified residue" description="Phosphoserine" evidence="2">
    <location>
        <position position="970"/>
    </location>
</feature>
<feature type="splice variant" id="VSP_016320" description="In isoform 2." evidence="9">
    <location>
        <begin position="158"/>
        <end position="179"/>
    </location>
</feature>
<feature type="mutagenesis site" description="Abrogates phosphatase activity." evidence="7">
    <original>C</original>
    <variation>S</variation>
    <location>
        <position position="393"/>
    </location>
</feature>
<feature type="sequence conflict" description="In Ref. 4; AAH46529." evidence="10" ref="4">
    <original>E</original>
    <variation>D</variation>
    <location>
        <position position="526"/>
    </location>
</feature>
<feature type="sequence conflict" description="In Ref. 3; BAE41639." evidence="10" ref="3">
    <original>V</original>
    <variation>A</variation>
    <location>
        <position position="550"/>
    </location>
</feature>
<feature type="sequence conflict" description="In Ref. 3; BAE41639." evidence="10" ref="3">
    <original>D</original>
    <variation>E</variation>
    <location>
        <position position="569"/>
    </location>
</feature>
<feature type="sequence conflict" description="In Ref. 4; AAH46529." evidence="10" ref="4">
    <original>A</original>
    <variation>V</variation>
    <location>
        <position position="867"/>
    </location>
</feature>
<feature type="sequence conflict" description="In Ref. 3; BAE41639." evidence="10" ref="3">
    <original>E</original>
    <variation>G</variation>
    <location>
        <position position="1010"/>
    </location>
</feature>
<feature type="sequence conflict" description="In Ref. 4; AAH46529." evidence="10" ref="4">
    <original>S</original>
    <variation>N</variation>
    <location>
        <position position="1035"/>
    </location>
</feature>
<name>SSH1_MOUSE</name>
<gene>
    <name evidence="12" type="primary">Ssh1</name>
    <name type="synonym">Kiaa1298</name>
    <name type="synonym">Ssh1l</name>
</gene>
<evidence type="ECO:0000250" key="1"/>
<evidence type="ECO:0000250" key="2">
    <source>
        <dbReference type="UniProtKB" id="Q8WYL5"/>
    </source>
</evidence>
<evidence type="ECO:0000255" key="3">
    <source>
        <dbReference type="PROSITE-ProRule" id="PRU00160"/>
    </source>
</evidence>
<evidence type="ECO:0000255" key="4">
    <source>
        <dbReference type="PROSITE-ProRule" id="PRU01342"/>
    </source>
</evidence>
<evidence type="ECO:0000255" key="5">
    <source>
        <dbReference type="PROSITE-ProRule" id="PRU10044"/>
    </source>
</evidence>
<evidence type="ECO:0000256" key="6">
    <source>
        <dbReference type="SAM" id="MobiDB-lite"/>
    </source>
</evidence>
<evidence type="ECO:0000269" key="7">
    <source>
    </source>
</evidence>
<evidence type="ECO:0000269" key="8">
    <source>
    </source>
</evidence>
<evidence type="ECO:0000303" key="9">
    <source>
    </source>
</evidence>
<evidence type="ECO:0000305" key="10"/>
<evidence type="ECO:0000305" key="11">
    <source>
    </source>
</evidence>
<evidence type="ECO:0000312" key="12">
    <source>
        <dbReference type="MGI" id="MGI:2686240"/>
    </source>
</evidence>
<evidence type="ECO:0007744" key="13">
    <source>
    </source>
</evidence>
<reference key="1">
    <citation type="journal article" date="2003" name="Genes Cells">
        <title>Differential activities, subcellular distribution and tissue expression patterns of three members of Slingshot family phosphatases that dephosphorylate cofilin.</title>
        <authorList>
            <person name="Ohta Y."/>
            <person name="Kousaka K."/>
            <person name="Nagata-Ohashi K."/>
            <person name="Ohashi K."/>
            <person name="Muramoto A."/>
            <person name="Shima Y."/>
            <person name="Niwa R."/>
            <person name="Uemura T."/>
            <person name="Mizuno K."/>
        </authorList>
    </citation>
    <scope>NUCLEOTIDE SEQUENCE [MRNA] (ISOFORM 1)</scope>
    <scope>FUNCTION</scope>
    <scope>CATALYTIC ACTIVITY</scope>
    <scope>INTERACTION WITH ACTIN</scope>
    <scope>SUBCELLULAR LOCATION</scope>
    <scope>TISSUE SPECIFICITY</scope>
    <scope>DEVELOPMENTAL STAGE</scope>
    <scope>MUTAGENESIS OF CYS-393</scope>
</reference>
<reference key="2">
    <citation type="journal article" date="2004" name="DNA Res.">
        <title>Prediction of the coding sequences of mouse homologues of KIAA gene: IV. The complete nucleotide sequences of 500 mouse KIAA-homologous cDNAs identified by screening of terminal sequences of cDNA clones randomly sampled from size-fractionated libraries.</title>
        <authorList>
            <person name="Okazaki N."/>
            <person name="Kikuno R."/>
            <person name="Ohara R."/>
            <person name="Inamoto S."/>
            <person name="Koseki H."/>
            <person name="Hiraoka S."/>
            <person name="Saga Y."/>
            <person name="Seino S."/>
            <person name="Nishimura M."/>
            <person name="Kaisho T."/>
            <person name="Hoshino K."/>
            <person name="Kitamura H."/>
            <person name="Nagase T."/>
            <person name="Ohara O."/>
            <person name="Koga H."/>
        </authorList>
    </citation>
    <scope>NUCLEOTIDE SEQUENCE [LARGE SCALE MRNA] (ISOFORM 2)</scope>
    <source>
        <tissue>Embryonic tail</tissue>
    </source>
</reference>
<reference key="3">
    <citation type="journal article" date="2005" name="Science">
        <title>The transcriptional landscape of the mammalian genome.</title>
        <authorList>
            <person name="Carninci P."/>
            <person name="Kasukawa T."/>
            <person name="Katayama S."/>
            <person name="Gough J."/>
            <person name="Frith M.C."/>
            <person name="Maeda N."/>
            <person name="Oyama R."/>
            <person name="Ravasi T."/>
            <person name="Lenhard B."/>
            <person name="Wells C."/>
            <person name="Kodzius R."/>
            <person name="Shimokawa K."/>
            <person name="Bajic V.B."/>
            <person name="Brenner S.E."/>
            <person name="Batalov S."/>
            <person name="Forrest A.R."/>
            <person name="Zavolan M."/>
            <person name="Davis M.J."/>
            <person name="Wilming L.G."/>
            <person name="Aidinis V."/>
            <person name="Allen J.E."/>
            <person name="Ambesi-Impiombato A."/>
            <person name="Apweiler R."/>
            <person name="Aturaliya R.N."/>
            <person name="Bailey T.L."/>
            <person name="Bansal M."/>
            <person name="Baxter L."/>
            <person name="Beisel K.W."/>
            <person name="Bersano T."/>
            <person name="Bono H."/>
            <person name="Chalk A.M."/>
            <person name="Chiu K.P."/>
            <person name="Choudhary V."/>
            <person name="Christoffels A."/>
            <person name="Clutterbuck D.R."/>
            <person name="Crowe M.L."/>
            <person name="Dalla E."/>
            <person name="Dalrymple B.P."/>
            <person name="de Bono B."/>
            <person name="Della Gatta G."/>
            <person name="di Bernardo D."/>
            <person name="Down T."/>
            <person name="Engstrom P."/>
            <person name="Fagiolini M."/>
            <person name="Faulkner G."/>
            <person name="Fletcher C.F."/>
            <person name="Fukushima T."/>
            <person name="Furuno M."/>
            <person name="Futaki S."/>
            <person name="Gariboldi M."/>
            <person name="Georgii-Hemming P."/>
            <person name="Gingeras T.R."/>
            <person name="Gojobori T."/>
            <person name="Green R.E."/>
            <person name="Gustincich S."/>
            <person name="Harbers M."/>
            <person name="Hayashi Y."/>
            <person name="Hensch T.K."/>
            <person name="Hirokawa N."/>
            <person name="Hill D."/>
            <person name="Huminiecki L."/>
            <person name="Iacono M."/>
            <person name="Ikeo K."/>
            <person name="Iwama A."/>
            <person name="Ishikawa T."/>
            <person name="Jakt M."/>
            <person name="Kanapin A."/>
            <person name="Katoh M."/>
            <person name="Kawasawa Y."/>
            <person name="Kelso J."/>
            <person name="Kitamura H."/>
            <person name="Kitano H."/>
            <person name="Kollias G."/>
            <person name="Krishnan S.P."/>
            <person name="Kruger A."/>
            <person name="Kummerfeld S.K."/>
            <person name="Kurochkin I.V."/>
            <person name="Lareau L.F."/>
            <person name="Lazarevic D."/>
            <person name="Lipovich L."/>
            <person name="Liu J."/>
            <person name="Liuni S."/>
            <person name="McWilliam S."/>
            <person name="Madan Babu M."/>
            <person name="Madera M."/>
            <person name="Marchionni L."/>
            <person name="Matsuda H."/>
            <person name="Matsuzawa S."/>
            <person name="Miki H."/>
            <person name="Mignone F."/>
            <person name="Miyake S."/>
            <person name="Morris K."/>
            <person name="Mottagui-Tabar S."/>
            <person name="Mulder N."/>
            <person name="Nakano N."/>
            <person name="Nakauchi H."/>
            <person name="Ng P."/>
            <person name="Nilsson R."/>
            <person name="Nishiguchi S."/>
            <person name="Nishikawa S."/>
            <person name="Nori F."/>
            <person name="Ohara O."/>
            <person name="Okazaki Y."/>
            <person name="Orlando V."/>
            <person name="Pang K.C."/>
            <person name="Pavan W.J."/>
            <person name="Pavesi G."/>
            <person name="Pesole G."/>
            <person name="Petrovsky N."/>
            <person name="Piazza S."/>
            <person name="Reed J."/>
            <person name="Reid J.F."/>
            <person name="Ring B.Z."/>
            <person name="Ringwald M."/>
            <person name="Rost B."/>
            <person name="Ruan Y."/>
            <person name="Salzberg S.L."/>
            <person name="Sandelin A."/>
            <person name="Schneider C."/>
            <person name="Schoenbach C."/>
            <person name="Sekiguchi K."/>
            <person name="Semple C.A."/>
            <person name="Seno S."/>
            <person name="Sessa L."/>
            <person name="Sheng Y."/>
            <person name="Shibata Y."/>
            <person name="Shimada H."/>
            <person name="Shimada K."/>
            <person name="Silva D."/>
            <person name="Sinclair B."/>
            <person name="Sperling S."/>
            <person name="Stupka E."/>
            <person name="Sugiura K."/>
            <person name="Sultana R."/>
            <person name="Takenaka Y."/>
            <person name="Taki K."/>
            <person name="Tammoja K."/>
            <person name="Tan S.L."/>
            <person name="Tang S."/>
            <person name="Taylor M.S."/>
            <person name="Tegner J."/>
            <person name="Teichmann S.A."/>
            <person name="Ueda H.R."/>
            <person name="van Nimwegen E."/>
            <person name="Verardo R."/>
            <person name="Wei C.L."/>
            <person name="Yagi K."/>
            <person name="Yamanishi H."/>
            <person name="Zabarovsky E."/>
            <person name="Zhu S."/>
            <person name="Zimmer A."/>
            <person name="Hide W."/>
            <person name="Bult C."/>
            <person name="Grimmond S.M."/>
            <person name="Teasdale R.D."/>
            <person name="Liu E.T."/>
            <person name="Brusic V."/>
            <person name="Quackenbush J."/>
            <person name="Wahlestedt C."/>
            <person name="Mattick J.S."/>
            <person name="Hume D.A."/>
            <person name="Kai C."/>
            <person name="Sasaki D."/>
            <person name="Tomaru Y."/>
            <person name="Fukuda S."/>
            <person name="Kanamori-Katayama M."/>
            <person name="Suzuki M."/>
            <person name="Aoki J."/>
            <person name="Arakawa T."/>
            <person name="Iida J."/>
            <person name="Imamura K."/>
            <person name="Itoh M."/>
            <person name="Kato T."/>
            <person name="Kawaji H."/>
            <person name="Kawagashira N."/>
            <person name="Kawashima T."/>
            <person name="Kojima M."/>
            <person name="Kondo S."/>
            <person name="Konno H."/>
            <person name="Nakano K."/>
            <person name="Ninomiya N."/>
            <person name="Nishio T."/>
            <person name="Okada M."/>
            <person name="Plessy C."/>
            <person name="Shibata K."/>
            <person name="Shiraki T."/>
            <person name="Suzuki S."/>
            <person name="Tagami M."/>
            <person name="Waki K."/>
            <person name="Watahiki A."/>
            <person name="Okamura-Oho Y."/>
            <person name="Suzuki H."/>
            <person name="Kawai J."/>
            <person name="Hayashizaki Y."/>
        </authorList>
    </citation>
    <scope>NUCLEOTIDE SEQUENCE [LARGE SCALE MRNA] (ISOFORM 1)</scope>
    <scope>NUCLEOTIDE SEQUENCE [LARGE SCALE MRNA] OF 539-1042 (ISOFORMS 1/2)</scope>
    <source>
        <strain>C57BL/6J</strain>
    </source>
</reference>
<reference key="4">
    <citation type="journal article" date="2004" name="Genome Res.">
        <title>The status, quality, and expansion of the NIH full-length cDNA project: the Mammalian Gene Collection (MGC).</title>
        <authorList>
            <consortium name="The MGC Project Team"/>
        </authorList>
    </citation>
    <scope>NUCLEOTIDE SEQUENCE [LARGE SCALE MRNA] OF 166-1042 (ISOFORM 1)</scope>
    <source>
        <strain>FVB/N</strain>
        <tissue>Liver</tissue>
    </source>
</reference>
<reference key="5">
    <citation type="journal article" date="2005" name="EMBO J.">
        <title>Interplay between components of a novel LIM kinase-slingshot phosphatase complex regulates cofilin.</title>
        <authorList>
            <person name="Soosairajah J."/>
            <person name="Maiti S."/>
            <person name="Wiggan O."/>
            <person name="Sarmiere P."/>
            <person name="Moussi N."/>
            <person name="Sarcevic B."/>
            <person name="Sampath R."/>
            <person name="Bamburg J.R."/>
            <person name="Bernard O."/>
        </authorList>
    </citation>
    <scope>INTERACTION WITH LIMK1</scope>
</reference>
<reference key="6">
    <citation type="journal article" date="2010" name="Cell">
        <title>A tissue-specific atlas of mouse protein phosphorylation and expression.</title>
        <authorList>
            <person name="Huttlin E.L."/>
            <person name="Jedrychowski M.P."/>
            <person name="Elias J.E."/>
            <person name="Goswami T."/>
            <person name="Rad R."/>
            <person name="Beausoleil S.A."/>
            <person name="Villen J."/>
            <person name="Haas W."/>
            <person name="Sowa M.E."/>
            <person name="Gygi S.P."/>
        </authorList>
    </citation>
    <scope>PHOSPHORYLATION [LARGE SCALE ANALYSIS] AT SER-516</scope>
    <scope>IDENTIFICATION BY MASS SPECTROMETRY [LARGE SCALE ANALYSIS]</scope>
    <source>
        <tissue>Kidney</tissue>
        <tissue>Pancreas</tissue>
        <tissue>Spleen</tissue>
        <tissue>Testis</tissue>
    </source>
</reference>
<comment type="function">
    <text evidence="7">Protein phosphatase which regulates actin filament dynamics. Dephosphorylates and activates the actin binding/depolymerizing factor cofilin, which subsequently binds to actin filaments and stimulates their disassembly. Inhibitory phosphorylation of cofilin is mediated by LIMK1, which may also be dephosphorylated and inactivated by this protein.</text>
</comment>
<comment type="catalytic activity">
    <reaction evidence="5">
        <text>O-phospho-L-tyrosyl-[protein] + H2O = L-tyrosyl-[protein] + phosphate</text>
        <dbReference type="Rhea" id="RHEA:10684"/>
        <dbReference type="Rhea" id="RHEA-COMP:10136"/>
        <dbReference type="Rhea" id="RHEA-COMP:20101"/>
        <dbReference type="ChEBI" id="CHEBI:15377"/>
        <dbReference type="ChEBI" id="CHEBI:43474"/>
        <dbReference type="ChEBI" id="CHEBI:46858"/>
        <dbReference type="ChEBI" id="CHEBI:61978"/>
        <dbReference type="EC" id="3.1.3.48"/>
    </reaction>
</comment>
<comment type="catalytic activity">
    <reaction evidence="7">
        <text>O-phospho-L-seryl-[protein] + H2O = L-seryl-[protein] + phosphate</text>
        <dbReference type="Rhea" id="RHEA:20629"/>
        <dbReference type="Rhea" id="RHEA-COMP:9863"/>
        <dbReference type="Rhea" id="RHEA-COMP:11604"/>
        <dbReference type="ChEBI" id="CHEBI:15377"/>
        <dbReference type="ChEBI" id="CHEBI:29999"/>
        <dbReference type="ChEBI" id="CHEBI:43474"/>
        <dbReference type="ChEBI" id="CHEBI:83421"/>
        <dbReference type="EC" id="3.1.3.16"/>
    </reaction>
    <physiologicalReaction direction="left-to-right" evidence="11">
        <dbReference type="Rhea" id="RHEA:20630"/>
    </physiologicalReaction>
</comment>
<comment type="catalytic activity">
    <reaction>
        <text>O-phospho-L-threonyl-[protein] + H2O = L-threonyl-[protein] + phosphate</text>
        <dbReference type="Rhea" id="RHEA:47004"/>
        <dbReference type="Rhea" id="RHEA-COMP:11060"/>
        <dbReference type="Rhea" id="RHEA-COMP:11605"/>
        <dbReference type="ChEBI" id="CHEBI:15377"/>
        <dbReference type="ChEBI" id="CHEBI:30013"/>
        <dbReference type="ChEBI" id="CHEBI:43474"/>
        <dbReference type="ChEBI" id="CHEBI:61977"/>
        <dbReference type="EC" id="3.1.3.16"/>
    </reaction>
</comment>
<comment type="subunit">
    <text evidence="1 7 8">Interacts with the 14-3-3 proteins YWHAB, YWHAG, YWHAQ, and YWHAZ. Interaction with 14-3-3 proteins inhibits phosphatase activity and also blocks recruitment to lamellipodia and stimulation by actin (By similarity). Interacts with actin and this stimulates phosphatase activity. Interacts with LIMK1.</text>
</comment>
<comment type="subcellular location">
    <subcellularLocation>
        <location evidence="7">Cytoplasm</location>
        <location evidence="7">Cytoskeleton</location>
    </subcellularLocation>
    <subcellularLocation>
        <location evidence="1">Cleavage furrow</location>
    </subcellularLocation>
    <subcellularLocation>
        <location evidence="1">Midbody</location>
    </subcellularLocation>
    <text evidence="1">Localized to the cleavage furrow and the midbody during cytokinesis (By similarity). Also colocalizes with F-actin in the cytoplasm and the cell periphery, which may allow local control of actin dynamics at sites of cell locomotion.</text>
</comment>
<comment type="alternative products">
    <event type="alternative splicing"/>
    <isoform>
        <id>Q76I79-1</id>
        <name>1</name>
        <sequence type="displayed"/>
    </isoform>
    <isoform>
        <id>Q76I79-2</id>
        <name>2</name>
        <sequence type="described" ref="VSP_016320"/>
    </isoform>
</comment>
<comment type="tissue specificity">
    <text evidence="7">Expressed in brain, heart, kidney and thymus. Also expressed at lower levels in liver, skeletal muscle, small intestine and spleen.</text>
</comment>
<comment type="developmental stage">
    <text evidence="7">Ubiquitously expressed in the embryo at 14.5 dpc.</text>
</comment>
<comment type="PTM">
    <text evidence="1">Phosphorylated. Inhibitory phosphorylation by PAK4 promotes binding to YWHAZ. Phosphorylation at Ser-970 is decreased by stimuli which promote actin reorganization and lamellipodia formation. Can be dephosphorylated and activated by PPP3CA/calcineurin A. Phosphorylation decreases immediately prior to telophase (By similarity).</text>
</comment>
<comment type="miscellaneous">
    <text>Tyrosine phosphatase activity has not been demonstrated for this protein to date.</text>
</comment>
<comment type="similarity">
    <text evidence="10">Belongs to the protein-tyrosine phosphatase family.</text>
</comment>
<comment type="sequence caution" evidence="10">
    <conflict type="erroneous initiation">
        <sequence resource="EMBL-CDS" id="BAD32422"/>
    </conflict>
</comment>
<dbReference type="EC" id="3.1.3.16" evidence="7"/>
<dbReference type="EC" id="3.1.3.48" evidence="5"/>
<dbReference type="EMBL" id="AB099287">
    <property type="protein sequence ID" value="BAC97810.1"/>
    <property type="molecule type" value="mRNA"/>
</dbReference>
<dbReference type="EMBL" id="AK173144">
    <property type="protein sequence ID" value="BAD32422.1"/>
    <property type="status" value="ALT_INIT"/>
    <property type="molecule type" value="mRNA"/>
</dbReference>
<dbReference type="EMBL" id="AK155557">
    <property type="protein sequence ID" value="BAE33323.1"/>
    <property type="molecule type" value="mRNA"/>
</dbReference>
<dbReference type="EMBL" id="AK170212">
    <property type="protein sequence ID" value="BAE41639.1"/>
    <property type="molecule type" value="mRNA"/>
</dbReference>
<dbReference type="EMBL" id="AK171556">
    <property type="protein sequence ID" value="BAE42524.1"/>
    <property type="molecule type" value="mRNA"/>
</dbReference>
<dbReference type="EMBL" id="BC046529">
    <property type="protein sequence ID" value="AAH46529.1"/>
    <property type="molecule type" value="mRNA"/>
</dbReference>
<dbReference type="CCDS" id="CCDS19556.1">
    <molecule id="Q76I79-1"/>
</dbReference>
<dbReference type="CCDS" id="CCDS89972.1">
    <molecule id="Q76I79-2"/>
</dbReference>
<dbReference type="RefSeq" id="NP_001350398.1">
    <molecule id="Q76I79-2"/>
    <property type="nucleotide sequence ID" value="NM_001363469.1"/>
</dbReference>
<dbReference type="RefSeq" id="NP_932777.2">
    <molecule id="Q76I79-1"/>
    <property type="nucleotide sequence ID" value="NM_198109.4"/>
</dbReference>
<dbReference type="SMR" id="Q76I79"/>
<dbReference type="BioGRID" id="231148">
    <property type="interactions" value="4"/>
</dbReference>
<dbReference type="FunCoup" id="Q76I79">
    <property type="interactions" value="1285"/>
</dbReference>
<dbReference type="IntAct" id="Q76I79">
    <property type="interactions" value="1"/>
</dbReference>
<dbReference type="STRING" id="10090.ENSMUSP00000124312"/>
<dbReference type="GlyGen" id="Q76I79">
    <property type="glycosylation" value="3 sites, 2 N-linked glycans (2 sites)"/>
</dbReference>
<dbReference type="iPTMnet" id="Q76I79"/>
<dbReference type="PhosphoSitePlus" id="Q76I79"/>
<dbReference type="jPOST" id="Q76I79"/>
<dbReference type="PaxDb" id="10090-ENSMUSP00000124312"/>
<dbReference type="ProteomicsDB" id="258737">
    <molecule id="Q76I79-1"/>
</dbReference>
<dbReference type="ProteomicsDB" id="258738">
    <molecule id="Q76I79-2"/>
</dbReference>
<dbReference type="Pumba" id="Q76I79"/>
<dbReference type="Antibodypedia" id="18311">
    <property type="antibodies" value="230 antibodies from 25 providers"/>
</dbReference>
<dbReference type="DNASU" id="231637"/>
<dbReference type="Ensembl" id="ENSMUST00000112298.10">
    <molecule id="Q76I79-2"/>
    <property type="protein sequence ID" value="ENSMUSP00000107917.4"/>
    <property type="gene ID" value="ENSMUSG00000042121.17"/>
</dbReference>
<dbReference type="Ensembl" id="ENSMUST00000159592.8">
    <molecule id="Q76I79-1"/>
    <property type="protein sequence ID" value="ENSMUSP00000124312.2"/>
    <property type="gene ID" value="ENSMUSG00000042121.17"/>
</dbReference>
<dbReference type="GeneID" id="231637"/>
<dbReference type="KEGG" id="mmu:231637"/>
<dbReference type="UCSC" id="uc008yyx.1">
    <molecule id="Q76I79-1"/>
    <property type="organism name" value="mouse"/>
</dbReference>
<dbReference type="UCSC" id="uc008yyz.1">
    <molecule id="Q76I79-2"/>
    <property type="organism name" value="mouse"/>
</dbReference>
<dbReference type="AGR" id="MGI:2686240"/>
<dbReference type="CTD" id="54434"/>
<dbReference type="MGI" id="MGI:2686240">
    <property type="gene designation" value="Ssh1"/>
</dbReference>
<dbReference type="VEuPathDB" id="HostDB:ENSMUSG00000042121"/>
<dbReference type="eggNOG" id="KOG1716">
    <property type="taxonomic scope" value="Eukaryota"/>
</dbReference>
<dbReference type="GeneTree" id="ENSGT00940000156133"/>
<dbReference type="HOGENOM" id="CLU_006650_1_0_1"/>
<dbReference type="InParanoid" id="Q76I79"/>
<dbReference type="OMA" id="ADCMYPP"/>
<dbReference type="OrthoDB" id="5779068at2759"/>
<dbReference type="PhylomeDB" id="Q76I79"/>
<dbReference type="TreeFam" id="TF319444"/>
<dbReference type="BioGRID-ORCS" id="231637">
    <property type="hits" value="3 hits in 77 CRISPR screens"/>
</dbReference>
<dbReference type="ChiTaRS" id="Ssh1">
    <property type="organism name" value="mouse"/>
</dbReference>
<dbReference type="PRO" id="PR:Q76I79"/>
<dbReference type="Proteomes" id="UP000000589">
    <property type="component" value="Chromosome 5"/>
</dbReference>
<dbReference type="RNAct" id="Q76I79">
    <property type="molecule type" value="protein"/>
</dbReference>
<dbReference type="Bgee" id="ENSMUSG00000042121">
    <property type="expression patterns" value="Expressed in internal carotid artery and 218 other cell types or tissues"/>
</dbReference>
<dbReference type="ExpressionAtlas" id="Q76I79">
    <property type="expression patterns" value="baseline and differential"/>
</dbReference>
<dbReference type="GO" id="GO:0031252">
    <property type="term" value="C:cell leading edge"/>
    <property type="evidence" value="ECO:0007669"/>
    <property type="project" value="Ensembl"/>
</dbReference>
<dbReference type="GO" id="GO:0032154">
    <property type="term" value="C:cleavage furrow"/>
    <property type="evidence" value="ECO:0007669"/>
    <property type="project" value="UniProtKB-SubCell"/>
</dbReference>
<dbReference type="GO" id="GO:0005737">
    <property type="term" value="C:cytoplasm"/>
    <property type="evidence" value="ECO:0007669"/>
    <property type="project" value="UniProtKB-KW"/>
</dbReference>
<dbReference type="GO" id="GO:0005856">
    <property type="term" value="C:cytoskeleton"/>
    <property type="evidence" value="ECO:0007669"/>
    <property type="project" value="UniProtKB-SubCell"/>
</dbReference>
<dbReference type="GO" id="GO:0030426">
    <property type="term" value="C:growth cone"/>
    <property type="evidence" value="ECO:0007669"/>
    <property type="project" value="Ensembl"/>
</dbReference>
<dbReference type="GO" id="GO:0030496">
    <property type="term" value="C:midbody"/>
    <property type="evidence" value="ECO:0007669"/>
    <property type="project" value="UniProtKB-SubCell"/>
</dbReference>
<dbReference type="GO" id="GO:0045202">
    <property type="term" value="C:synapse"/>
    <property type="evidence" value="ECO:0007669"/>
    <property type="project" value="GOC"/>
</dbReference>
<dbReference type="GO" id="GO:0003779">
    <property type="term" value="F:actin binding"/>
    <property type="evidence" value="ECO:0007669"/>
    <property type="project" value="UniProtKB-KW"/>
</dbReference>
<dbReference type="GO" id="GO:0004721">
    <property type="term" value="F:phosphoprotein phosphatase activity"/>
    <property type="evidence" value="ECO:0000266"/>
    <property type="project" value="MGI"/>
</dbReference>
<dbReference type="GO" id="GO:0004722">
    <property type="term" value="F:protein serine/threonine phosphatase activity"/>
    <property type="evidence" value="ECO:0007669"/>
    <property type="project" value="UniProtKB-EC"/>
</dbReference>
<dbReference type="GO" id="GO:0004725">
    <property type="term" value="F:protein tyrosine phosphatase activity"/>
    <property type="evidence" value="ECO:0007669"/>
    <property type="project" value="UniProtKB-EC"/>
</dbReference>
<dbReference type="GO" id="GO:0030036">
    <property type="term" value="P:actin cytoskeleton organization"/>
    <property type="evidence" value="ECO:0007669"/>
    <property type="project" value="Ensembl"/>
</dbReference>
<dbReference type="GO" id="GO:0000902">
    <property type="term" value="P:cell morphogenesis"/>
    <property type="evidence" value="ECO:0007669"/>
    <property type="project" value="Ensembl"/>
</dbReference>
<dbReference type="GO" id="GO:0071318">
    <property type="term" value="P:cellular response to ATP"/>
    <property type="evidence" value="ECO:0000266"/>
    <property type="project" value="MGI"/>
</dbReference>
<dbReference type="GO" id="GO:0098976">
    <property type="term" value="P:excitatory chemical synaptic transmission"/>
    <property type="evidence" value="ECO:0007669"/>
    <property type="project" value="Ensembl"/>
</dbReference>
<dbReference type="GO" id="GO:0030837">
    <property type="term" value="P:negative regulation of actin filament polymerization"/>
    <property type="evidence" value="ECO:0007669"/>
    <property type="project" value="InterPro"/>
</dbReference>
<dbReference type="GO" id="GO:1904719">
    <property type="term" value="P:positive regulation of AMPA glutamate receptor clustering"/>
    <property type="evidence" value="ECO:0007669"/>
    <property type="project" value="Ensembl"/>
</dbReference>
<dbReference type="GO" id="GO:2000463">
    <property type="term" value="P:positive regulation of excitatory postsynaptic potential"/>
    <property type="evidence" value="ECO:0007669"/>
    <property type="project" value="Ensembl"/>
</dbReference>
<dbReference type="GO" id="GO:0031915">
    <property type="term" value="P:positive regulation of synaptic plasticity"/>
    <property type="evidence" value="ECO:0007669"/>
    <property type="project" value="Ensembl"/>
</dbReference>
<dbReference type="GO" id="GO:1904754">
    <property type="term" value="P:positive regulation of vascular associated smooth muscle cell migration"/>
    <property type="evidence" value="ECO:0007669"/>
    <property type="project" value="Ensembl"/>
</dbReference>
<dbReference type="GO" id="GO:0051246">
    <property type="term" value="P:regulation of protein metabolic process"/>
    <property type="evidence" value="ECO:0000266"/>
    <property type="project" value="MGI"/>
</dbReference>
<dbReference type="CDD" id="cd14570">
    <property type="entry name" value="DSP_slingshot_1"/>
    <property type="match status" value="1"/>
</dbReference>
<dbReference type="CDD" id="cd11652">
    <property type="entry name" value="SSH-N"/>
    <property type="match status" value="1"/>
</dbReference>
<dbReference type="FunFam" id="3.90.190.10:FF:000004">
    <property type="entry name" value="Protein phosphatase Slingshot homolog 2"/>
    <property type="match status" value="1"/>
</dbReference>
<dbReference type="FunFam" id="1.10.10.60:FF:000423">
    <property type="entry name" value="Slingshot protein phosphatase 1a"/>
    <property type="match status" value="1"/>
</dbReference>
<dbReference type="Gene3D" id="1.10.10.60">
    <property type="entry name" value="Homeodomain-like"/>
    <property type="match status" value="1"/>
</dbReference>
<dbReference type="Gene3D" id="3.90.190.10">
    <property type="entry name" value="Protein tyrosine phosphatase superfamily"/>
    <property type="match status" value="1"/>
</dbReference>
<dbReference type="InterPro" id="IPR014876">
    <property type="entry name" value="DEK_C"/>
</dbReference>
<dbReference type="InterPro" id="IPR027233">
    <property type="entry name" value="DSP_SSH1"/>
</dbReference>
<dbReference type="InterPro" id="IPR000340">
    <property type="entry name" value="Dual-sp_phosphatase_cat-dom"/>
</dbReference>
<dbReference type="InterPro" id="IPR043587">
    <property type="entry name" value="Phosphatase_SSH-like"/>
</dbReference>
<dbReference type="InterPro" id="IPR029021">
    <property type="entry name" value="Prot-tyrosine_phosphatase-like"/>
</dbReference>
<dbReference type="InterPro" id="IPR043588">
    <property type="entry name" value="SSH-N"/>
</dbReference>
<dbReference type="InterPro" id="IPR016130">
    <property type="entry name" value="Tyr_Pase_AS"/>
</dbReference>
<dbReference type="InterPro" id="IPR000387">
    <property type="entry name" value="Tyr_Pase_dom"/>
</dbReference>
<dbReference type="InterPro" id="IPR020422">
    <property type="entry name" value="TYR_PHOSPHATASE_DUAL_dom"/>
</dbReference>
<dbReference type="PANTHER" id="PTHR45864:SF5">
    <property type="entry name" value="PROTEIN PHOSPHATASE SLINGSHOT HOMOLOG 1"/>
    <property type="match status" value="1"/>
</dbReference>
<dbReference type="PANTHER" id="PTHR45864">
    <property type="entry name" value="SLINGSHOT PROTEIN PHOSPHATASE HOMOLOG"/>
    <property type="match status" value="1"/>
</dbReference>
<dbReference type="Pfam" id="PF08766">
    <property type="entry name" value="DEK_C"/>
    <property type="match status" value="1"/>
</dbReference>
<dbReference type="Pfam" id="PF00782">
    <property type="entry name" value="DSPc"/>
    <property type="match status" value="1"/>
</dbReference>
<dbReference type="Pfam" id="PF23040">
    <property type="entry name" value="PH_SSH1-like_1st"/>
    <property type="match status" value="1"/>
</dbReference>
<dbReference type="SMART" id="SM00195">
    <property type="entry name" value="DSPc"/>
    <property type="match status" value="1"/>
</dbReference>
<dbReference type="SUPFAM" id="SSF52799">
    <property type="entry name" value="(Phosphotyrosine protein) phosphatases II"/>
    <property type="match status" value="1"/>
</dbReference>
<dbReference type="SUPFAM" id="SSF109715">
    <property type="entry name" value="DEK C-terminal domain"/>
    <property type="match status" value="1"/>
</dbReference>
<dbReference type="PROSITE" id="PS51998">
    <property type="entry name" value="DEK_C"/>
    <property type="match status" value="1"/>
</dbReference>
<dbReference type="PROSITE" id="PS00383">
    <property type="entry name" value="TYR_PHOSPHATASE_1"/>
    <property type="match status" value="1"/>
</dbReference>
<dbReference type="PROSITE" id="PS50056">
    <property type="entry name" value="TYR_PHOSPHATASE_2"/>
    <property type="match status" value="1"/>
</dbReference>
<dbReference type="PROSITE" id="PS50054">
    <property type="entry name" value="TYR_PHOSPHATASE_DUAL"/>
    <property type="match status" value="1"/>
</dbReference>
<sequence length="1042" mass="115297">MALVTLQRSPTPSAASSSASNSELEAGSDEERKLNLSLSESFFMVKGAALFLQQGNSPQGQRSLQHPHKHAGDLPQHLQVMINLLRCEDRIKLAVRLESVWTDRVRYMVVVYTSGRQDTEENILLGVDFSSKESKSCTIGMVLRLWSDTKIHLDGDGGFSVSTAGRMHIFKPVSVQAMWSALQVLHKACEVARRHNYFPGGVALIWATYYESCISSEQSCINEWNAMQDLESTRPDSPALFVDKPTEGERTERLIKAKLRSIMMSQDLENVTSKEIRNELEKQMNCNLKEFKEFIDNEMLLILGQMDKPSLIFDHLYLGSEWNASNLEELQGSGVDYILNVTREIDNFFPGLFAYHNIRVYDEETTDLLAHWNEAYHFINKAKRNHSKCLVHCKMGVSRSASTVIAYAMKEFGWPLEKAYNYVKQKRSITRPNAGFMRQLSEYEGILDASKQRHNKLWRQQPTDDTIAEPSEFLPETLDGALDAQLPCLDDTTHPGLPRSLAPGGPALPCCFRRLSDPLLLPHHDETGGLVHLEDLEKDALLEEEESQPVEVHKLVQHPQEGARLCEKDVKRKLEFGNSKPRSDSLPQVEELEKDGSPRTGRWRRASTQLDRSLLDQENLNNNNSKRSCPDDLERDAMFGILSKVKPPYTSCADCMYPTAGGTPEAYMERHEDPSSSAICTQPTFLPHVTSSPMAHASSRSRAPERPASGPANTSPFLLPAGSRKPDVSGSGAGAAPEPPASLLEPSRETSKALPKSLQLKNPHCDKNAANMEVSAKEEPSPKKDPKPAKDLRLLFSNEAEKPTTNSYLMQHQESIIQLQKAGLVRKHTKELERLKSLPSDSPAACRDSATCRLEASIPEEGSQEPAHPALCSQAGSEEQPVGGTLQKSPTSTLPRLDHTSNFSKDFLKTVCYTPTSSSISSNLTRSSSSDSIHSVRGKPGLVKQRAQEIETRLRLAGLTVSSPLKRSHSLAKLGSLNFSTEDLSSEADTSTIADSQDAKCGLSSSFLPEPQSAPRDPAATSKSSGKSAPEHLKSPSRVNKS</sequence>
<proteinExistence type="evidence at protein level"/>
<protein>
    <recommendedName>
        <fullName evidence="10">Protein phosphatase Slingshot homolog 1</fullName>
        <ecNumber evidence="7">3.1.3.16</ecNumber>
        <ecNumber evidence="5">3.1.3.48</ecNumber>
    </recommendedName>
    <alternativeName>
        <fullName>SSH-like protein 1</fullName>
        <shortName>SSH-1L</shortName>
        <shortName>mSSH-1L</shortName>
    </alternativeName>
</protein>
<organism>
    <name type="scientific">Mus musculus</name>
    <name type="common">Mouse</name>
    <dbReference type="NCBI Taxonomy" id="10090"/>
    <lineage>
        <taxon>Eukaryota</taxon>
        <taxon>Metazoa</taxon>
        <taxon>Chordata</taxon>
        <taxon>Craniata</taxon>
        <taxon>Vertebrata</taxon>
        <taxon>Euteleostomi</taxon>
        <taxon>Mammalia</taxon>
        <taxon>Eutheria</taxon>
        <taxon>Euarchontoglires</taxon>
        <taxon>Glires</taxon>
        <taxon>Rodentia</taxon>
        <taxon>Myomorpha</taxon>
        <taxon>Muroidea</taxon>
        <taxon>Muridae</taxon>
        <taxon>Murinae</taxon>
        <taxon>Mus</taxon>
        <taxon>Mus</taxon>
    </lineage>
</organism>
<keyword id="KW-0007">Acetylation</keyword>
<keyword id="KW-0009">Actin-binding</keyword>
<keyword id="KW-0025">Alternative splicing</keyword>
<keyword id="KW-0963">Cytoplasm</keyword>
<keyword id="KW-0206">Cytoskeleton</keyword>
<keyword id="KW-0378">Hydrolase</keyword>
<keyword id="KW-0597">Phosphoprotein</keyword>
<keyword id="KW-0904">Protein phosphatase</keyword>
<keyword id="KW-1185">Reference proteome</keyword>